<organism>
    <name type="scientific">Caenorhabditis elegans</name>
    <dbReference type="NCBI Taxonomy" id="6239"/>
    <lineage>
        <taxon>Eukaryota</taxon>
        <taxon>Metazoa</taxon>
        <taxon>Ecdysozoa</taxon>
        <taxon>Nematoda</taxon>
        <taxon>Chromadorea</taxon>
        <taxon>Rhabditida</taxon>
        <taxon>Rhabditina</taxon>
        <taxon>Rhabditomorpha</taxon>
        <taxon>Rhabditoidea</taxon>
        <taxon>Rhabditidae</taxon>
        <taxon>Peloderinae</taxon>
        <taxon>Caenorhabditis</taxon>
    </lineage>
</organism>
<dbReference type="EMBL" id="Z46787">
    <property type="protein sequence ID" value="CAA86749.1"/>
    <property type="molecule type" value="Genomic_DNA"/>
</dbReference>
<dbReference type="PIR" id="T19332">
    <property type="entry name" value="T19332"/>
</dbReference>
<dbReference type="RefSeq" id="NP_497826.1">
    <property type="nucleotide sequence ID" value="NM_065425.4"/>
</dbReference>
<dbReference type="FunCoup" id="Q09254">
    <property type="interactions" value="222"/>
</dbReference>
<dbReference type="STRING" id="6239.C16C10.11.1"/>
<dbReference type="PaxDb" id="6239-C16C10.11"/>
<dbReference type="PeptideAtlas" id="Q09254"/>
<dbReference type="EnsemblMetazoa" id="C16C10.11.1">
    <property type="protein sequence ID" value="C16C10.11.1"/>
    <property type="gene ID" value="WBGene00007630"/>
</dbReference>
<dbReference type="GeneID" id="175529"/>
<dbReference type="KEGG" id="cel:CELE_C16C10.11"/>
<dbReference type="UCSC" id="C16C10.11.1">
    <property type="organism name" value="c. elegans"/>
</dbReference>
<dbReference type="AGR" id="WB:WBGene00007630"/>
<dbReference type="CTD" id="175529"/>
<dbReference type="WormBase" id="C16C10.11">
    <property type="protein sequence ID" value="CE01491"/>
    <property type="gene ID" value="WBGene00007630"/>
    <property type="gene designation" value="har-1"/>
</dbReference>
<dbReference type="eggNOG" id="KOG4090">
    <property type="taxonomic scope" value="Eukaryota"/>
</dbReference>
<dbReference type="GeneTree" id="ENSGT00940000172340"/>
<dbReference type="HOGENOM" id="CLU_093520_2_1_1"/>
<dbReference type="InParanoid" id="Q09254"/>
<dbReference type="OMA" id="PSQYGPC"/>
<dbReference type="OrthoDB" id="1106148at2759"/>
<dbReference type="PhylomeDB" id="Q09254"/>
<dbReference type="PRO" id="PR:Q09254"/>
<dbReference type="Proteomes" id="UP000001940">
    <property type="component" value="Chromosome III"/>
</dbReference>
<dbReference type="Bgee" id="WBGene00007630">
    <property type="expression patterns" value="Expressed in pharyngeal muscle cell (C elegans) and 4 other cell types or tissues"/>
</dbReference>
<dbReference type="GO" id="GO:0005737">
    <property type="term" value="C:cytoplasm"/>
    <property type="evidence" value="ECO:0007005"/>
    <property type="project" value="WormBase"/>
</dbReference>
<dbReference type="GO" id="GO:0005739">
    <property type="term" value="C:mitochondrion"/>
    <property type="evidence" value="ECO:0007005"/>
    <property type="project" value="WormBase"/>
</dbReference>
<dbReference type="GO" id="GO:0005634">
    <property type="term" value="C:nucleus"/>
    <property type="evidence" value="ECO:0000318"/>
    <property type="project" value="GO_Central"/>
</dbReference>
<dbReference type="GO" id="GO:0055120">
    <property type="term" value="C:striated muscle dense body"/>
    <property type="evidence" value="ECO:0007005"/>
    <property type="project" value="WormBase"/>
</dbReference>
<dbReference type="GO" id="GO:0008340">
    <property type="term" value="P:determination of adult lifespan"/>
    <property type="evidence" value="ECO:0000315"/>
    <property type="project" value="UniProtKB"/>
</dbReference>
<dbReference type="GO" id="GO:0007005">
    <property type="term" value="P:mitochondrion organization"/>
    <property type="evidence" value="ECO:0000316"/>
    <property type="project" value="UniProtKB"/>
</dbReference>
<dbReference type="InterPro" id="IPR010625">
    <property type="entry name" value="CHCH"/>
</dbReference>
<dbReference type="InterPro" id="IPR055304">
    <property type="entry name" value="CHCHD2/10-like"/>
</dbReference>
<dbReference type="PANTHER" id="PTHR13523:SF2">
    <property type="entry name" value="COILED-COIL-HELIX-COILED-COIL-HELIX DOMAIN CONTAINING 2, ISOFORM A-RELATED"/>
    <property type="match status" value="1"/>
</dbReference>
<dbReference type="PANTHER" id="PTHR13523">
    <property type="entry name" value="COILED-COIL-HELIX-COILED-COIL-HELIX DOMAIN CONTAINING 2/NUR77"/>
    <property type="match status" value="1"/>
</dbReference>
<dbReference type="Pfam" id="PF06747">
    <property type="entry name" value="CHCH"/>
    <property type="match status" value="1"/>
</dbReference>
<dbReference type="PROSITE" id="PS51808">
    <property type="entry name" value="CHCH"/>
    <property type="match status" value="1"/>
</dbReference>
<evidence type="ECO:0000255" key="1">
    <source>
        <dbReference type="PROSITE-ProRule" id="PRU01150"/>
    </source>
</evidence>
<evidence type="ECO:0000256" key="2">
    <source>
        <dbReference type="SAM" id="MobiDB-lite"/>
    </source>
</evidence>
<reference key="1">
    <citation type="journal article" date="1998" name="Science">
        <title>Genome sequence of the nematode C. elegans: a platform for investigating biology.</title>
        <authorList>
            <consortium name="The C. elegans sequencing consortium"/>
        </authorList>
    </citation>
    <scope>NUCLEOTIDE SEQUENCE [LARGE SCALE GENOMIC DNA]</scope>
    <source>
        <strain>Bristol N2</strain>
    </source>
</reference>
<gene>
    <name type="primary">har-1</name>
    <name type="ORF">C16C10.11</name>
</gene>
<feature type="chain" id="PRO_0000065185" description="Hemiasterlin resistant protein 1">
    <location>
        <begin position="1"/>
        <end position="154"/>
    </location>
</feature>
<feature type="domain" description="CHCH" evidence="1">
    <location>
        <begin position="116"/>
        <end position="154"/>
    </location>
</feature>
<feature type="region of interest" description="Disordered" evidence="2">
    <location>
        <begin position="1"/>
        <end position="64"/>
    </location>
</feature>
<feature type="region of interest" description="Disordered" evidence="2">
    <location>
        <begin position="86"/>
        <end position="109"/>
    </location>
</feature>
<feature type="short sequence motif" description="Cx9C motif 1" evidence="1">
    <location>
        <begin position="119"/>
        <end position="129"/>
    </location>
</feature>
<feature type="short sequence motif" description="Cx9C motif 2" evidence="1">
    <location>
        <begin position="139"/>
        <end position="149"/>
    </location>
</feature>
<feature type="compositionally biased region" description="Low complexity" evidence="2">
    <location>
        <begin position="7"/>
        <end position="28"/>
    </location>
</feature>
<feature type="compositionally biased region" description="Low complexity" evidence="2">
    <location>
        <begin position="48"/>
        <end position="57"/>
    </location>
</feature>
<feature type="compositionally biased region" description="Low complexity" evidence="2">
    <location>
        <begin position="96"/>
        <end position="109"/>
    </location>
</feature>
<feature type="disulfide bond" evidence="1">
    <location>
        <begin position="119"/>
        <end position="149"/>
    </location>
</feature>
<feature type="disulfide bond" evidence="1">
    <location>
        <begin position="129"/>
        <end position="139"/>
    </location>
</feature>
<sequence length="154" mass="15388">MVRRRTASPSPSAPVRSAPRPAAQSSFAAPPPRPAAAAPAYHPPAAPTPMGAPMGAPSQGPGLMKQMAATAGGVAIGSAVGHAVGGMFTGGGSSHAEQAPAAAAAPAGAPQASGYSQPCEFEWRQFVDCAQNQSDVSLCNGFNDIFKQCKARYA</sequence>
<name>HAR1_CAEEL</name>
<keyword id="KW-1015">Disulfide bond</keyword>
<keyword id="KW-1185">Reference proteome</keyword>
<proteinExistence type="predicted"/>
<protein>
    <recommendedName>
        <fullName>Hemiasterlin resistant protein 1</fullName>
    </recommendedName>
</protein>
<accession>Q09254</accession>